<dbReference type="EC" id="5.3.2.2" evidence="1"/>
<dbReference type="EMBL" id="BC074365">
    <property type="protein sequence ID" value="AAH74365.1"/>
    <property type="molecule type" value="mRNA"/>
</dbReference>
<dbReference type="RefSeq" id="NP_001086239.1">
    <property type="nucleotide sequence ID" value="NM_001092770.1"/>
</dbReference>
<dbReference type="SMR" id="Q6GLT8"/>
<dbReference type="DNASU" id="444668"/>
<dbReference type="GeneID" id="444668"/>
<dbReference type="KEGG" id="xla:444668"/>
<dbReference type="AGR" id="Xenbase:XB-GENE-964035"/>
<dbReference type="CTD" id="444668"/>
<dbReference type="Xenbase" id="XB-GENE-964035">
    <property type="gene designation" value="fahd2a.L"/>
</dbReference>
<dbReference type="OrthoDB" id="411064at2759"/>
<dbReference type="Proteomes" id="UP000186698">
    <property type="component" value="Chromosome 3L"/>
</dbReference>
<dbReference type="Bgee" id="444668">
    <property type="expression patterns" value="Expressed in testis and 19 other cell types or tissues"/>
</dbReference>
<dbReference type="GO" id="GO:0005739">
    <property type="term" value="C:mitochondrion"/>
    <property type="evidence" value="ECO:0007669"/>
    <property type="project" value="UniProtKB-SubCell"/>
</dbReference>
<dbReference type="GO" id="GO:0046872">
    <property type="term" value="F:metal ion binding"/>
    <property type="evidence" value="ECO:0007669"/>
    <property type="project" value="UniProtKB-KW"/>
</dbReference>
<dbReference type="GO" id="GO:0050163">
    <property type="term" value="F:oxaloacetate tautomerase activity"/>
    <property type="evidence" value="ECO:0000250"/>
    <property type="project" value="UniProtKB"/>
</dbReference>
<dbReference type="GO" id="GO:0006107">
    <property type="term" value="P:oxaloacetate metabolic process"/>
    <property type="evidence" value="ECO:0000250"/>
    <property type="project" value="UniProtKB"/>
</dbReference>
<dbReference type="FunFam" id="3.90.850.10:FF:000002">
    <property type="entry name" value="2-hydroxyhepta-2,4-diene-1,7-dioate isomerase"/>
    <property type="match status" value="1"/>
</dbReference>
<dbReference type="Gene3D" id="3.90.850.10">
    <property type="entry name" value="Fumarylacetoacetase-like, C-terminal domain"/>
    <property type="match status" value="1"/>
</dbReference>
<dbReference type="InterPro" id="IPR051121">
    <property type="entry name" value="FAH"/>
</dbReference>
<dbReference type="InterPro" id="IPR011234">
    <property type="entry name" value="Fumarylacetoacetase-like_C"/>
</dbReference>
<dbReference type="InterPro" id="IPR036663">
    <property type="entry name" value="Fumarylacetoacetase_C_sf"/>
</dbReference>
<dbReference type="PANTHER" id="PTHR42796:SF4">
    <property type="entry name" value="FUMARYLACETOACETATE HYDROLASE DOMAIN-CONTAINING PROTEIN 2A"/>
    <property type="match status" value="1"/>
</dbReference>
<dbReference type="PANTHER" id="PTHR42796">
    <property type="entry name" value="FUMARYLACETOACETATE HYDROLASE DOMAIN-CONTAINING PROTEIN 2A-RELATED"/>
    <property type="match status" value="1"/>
</dbReference>
<dbReference type="Pfam" id="PF01557">
    <property type="entry name" value="FAA_hydrolase"/>
    <property type="match status" value="1"/>
</dbReference>
<dbReference type="SUPFAM" id="SSF56529">
    <property type="entry name" value="FAH"/>
    <property type="match status" value="1"/>
</dbReference>
<feature type="transit peptide" description="Mitochondrion" evidence="3">
    <location>
        <begin position="1"/>
        <end position="31"/>
    </location>
</feature>
<feature type="chain" id="PRO_0000367322" description="Oxaloacetate tautomerase fahd2, mitochondrial" evidence="3">
    <location>
        <begin position="32"/>
        <end position="319"/>
    </location>
</feature>
<feature type="binding site" evidence="2">
    <location>
        <position position="164"/>
    </location>
    <ligand>
        <name>Mg(2+)</name>
        <dbReference type="ChEBI" id="CHEBI:18420"/>
    </ligand>
</feature>
<feature type="binding site" evidence="2">
    <location>
        <position position="166"/>
    </location>
    <ligand>
        <name>Mg(2+)</name>
        <dbReference type="ChEBI" id="CHEBI:18420"/>
    </ligand>
</feature>
<feature type="binding site" evidence="2">
    <location>
        <position position="195"/>
    </location>
    <ligand>
        <name>Mg(2+)</name>
        <dbReference type="ChEBI" id="CHEBI:18420"/>
    </ligand>
</feature>
<proteinExistence type="evidence at transcript level"/>
<organism>
    <name type="scientific">Xenopus laevis</name>
    <name type="common">African clawed frog</name>
    <dbReference type="NCBI Taxonomy" id="8355"/>
    <lineage>
        <taxon>Eukaryota</taxon>
        <taxon>Metazoa</taxon>
        <taxon>Chordata</taxon>
        <taxon>Craniata</taxon>
        <taxon>Vertebrata</taxon>
        <taxon>Euteleostomi</taxon>
        <taxon>Amphibia</taxon>
        <taxon>Batrachia</taxon>
        <taxon>Anura</taxon>
        <taxon>Pipoidea</taxon>
        <taxon>Pipidae</taxon>
        <taxon>Xenopodinae</taxon>
        <taxon>Xenopus</taxon>
        <taxon>Xenopus</taxon>
    </lineage>
</organism>
<reference key="1">
    <citation type="submission" date="2004-06" db="EMBL/GenBank/DDBJ databases">
        <authorList>
            <consortium name="NIH - Xenopus Gene Collection (XGC) project"/>
        </authorList>
    </citation>
    <scope>NUCLEOTIDE SEQUENCE [LARGE SCALE MRNA]</scope>
    <source>
        <tissue>Brain</tissue>
    </source>
</reference>
<comment type="function">
    <text evidence="1">Tautomerase that converts enol-oxaloacetate, a strong inhibitor of succinate dehydrogenase, to the physiological keto form of oxaloacetate. It is thereby required to maximize aerobic respiration efficiency by preventing succinate dehydrogenase inhibition.</text>
</comment>
<comment type="catalytic activity">
    <reaction evidence="1">
        <text>oxaloacetate = enol-oxaloacetate</text>
        <dbReference type="Rhea" id="RHEA:16021"/>
        <dbReference type="ChEBI" id="CHEBI:16452"/>
        <dbReference type="ChEBI" id="CHEBI:17479"/>
        <dbReference type="EC" id="5.3.2.2"/>
    </reaction>
    <physiologicalReaction direction="right-to-left" evidence="1">
        <dbReference type="Rhea" id="RHEA:16023"/>
    </physiologicalReaction>
</comment>
<comment type="cofactor">
    <cofactor evidence="2">
        <name>Mg(2+)</name>
        <dbReference type="ChEBI" id="CHEBI:18420"/>
    </cofactor>
    <cofactor evidence="2">
        <name>Mn(2+)</name>
        <dbReference type="ChEBI" id="CHEBI:29035"/>
    </cofactor>
    <text evidence="2">Requires a divalent metal cation for activity.</text>
</comment>
<comment type="subcellular location">
    <subcellularLocation>
        <location evidence="1">Mitochondrion</location>
    </subcellularLocation>
</comment>
<comment type="similarity">
    <text evidence="4">Belongs to the FAH family.</text>
</comment>
<protein>
    <recommendedName>
        <fullName evidence="4">Oxaloacetate tautomerase fahd2, mitochondrial</fullName>
        <ecNumber evidence="1">5.3.2.2</ecNumber>
    </recommendedName>
    <alternativeName>
        <fullName evidence="4">Fumarylacetoacetate hydrolase domain-containing protein 2</fullName>
    </alternativeName>
</protein>
<accession>Q6GLT8</accession>
<keyword id="KW-0413">Isomerase</keyword>
<keyword id="KW-0460">Magnesium</keyword>
<keyword id="KW-0479">Metal-binding</keyword>
<keyword id="KW-0496">Mitochondrion</keyword>
<keyword id="KW-1185">Reference proteome</keyword>
<keyword id="KW-0809">Transit peptide</keyword>
<name>FAHD2_XENLA</name>
<gene>
    <name type="primary">fahd2</name>
    <name type="synonym">fahd2a</name>
</gene>
<sequence length="319" mass="35122">MLTQTRVALRVLKNAHLTLPKRNISQSPALSMRLVQFQSSDSPSPRIGLELQDGGNIIDLNAYDPSLPCRMREFLEMGESALQTAKSALDSNQHILSRSNISLLAPITNPEKIICIGMNYVDHCLEQNVPVPKEPIIFNKFASSIVGPSDPIRIPEESQEVDWEAELAFVIGKKGKNIKEEDAMDHVVGYTVAHDVSARDWQMKKNGKQWLLGKTFDTFCPLGPALVTKDVISDPHNLGIRCRVNGDLVQNSNTNQMVFKTEALIAWASKFVTLNPGDVFLTGTPPGVGVFRKPPVFLKAGDVVRCEIDELGAISNPVV</sequence>
<evidence type="ECO:0000250" key="1">
    <source>
        <dbReference type="UniProtKB" id="F1MLX0"/>
    </source>
</evidence>
<evidence type="ECO:0000250" key="2">
    <source>
        <dbReference type="UniProtKB" id="Q6P587"/>
    </source>
</evidence>
<evidence type="ECO:0000255" key="3"/>
<evidence type="ECO:0000305" key="4"/>